<reference key="1">
    <citation type="submission" date="1998-05" db="EMBL/GenBank/DDBJ databases">
        <title>A human and yeast gene involved in cell division.</title>
        <authorList>
            <person name="Pengue G."/>
            <person name="Lutfiyya L.L."/>
            <person name="Mazzarella R."/>
        </authorList>
    </citation>
    <scope>NUCLEOTIDE SEQUENCE [MRNA] (ISOFORM 2)</scope>
</reference>
<reference key="2">
    <citation type="submission" date="1998-04" db="EMBL/GenBank/DDBJ databases">
        <title>Transcription map in Xp11.23.</title>
        <authorList>
            <person name="Strom T.M."/>
            <person name="Nyakatura G."/>
            <person name="Hellebrand H."/>
            <person name="Drescher B."/>
            <person name="Rosenthal A."/>
            <person name="Meindl A."/>
        </authorList>
    </citation>
    <scope>NUCLEOTIDE SEQUENCE [LARGE SCALE MRNA] (ISOFORM 1)</scope>
    <source>
        <tissue>Brain</tissue>
    </source>
</reference>
<reference key="3">
    <citation type="journal article" date="2004" name="Nat. Genet.">
        <title>Complete sequencing and characterization of 21,243 full-length human cDNAs.</title>
        <authorList>
            <person name="Ota T."/>
            <person name="Suzuki Y."/>
            <person name="Nishikawa T."/>
            <person name="Otsuki T."/>
            <person name="Sugiyama T."/>
            <person name="Irie R."/>
            <person name="Wakamatsu A."/>
            <person name="Hayashi K."/>
            <person name="Sato H."/>
            <person name="Nagai K."/>
            <person name="Kimura K."/>
            <person name="Makita H."/>
            <person name="Sekine M."/>
            <person name="Obayashi M."/>
            <person name="Nishi T."/>
            <person name="Shibahara T."/>
            <person name="Tanaka T."/>
            <person name="Ishii S."/>
            <person name="Yamamoto J."/>
            <person name="Saito K."/>
            <person name="Kawai Y."/>
            <person name="Isono Y."/>
            <person name="Nakamura Y."/>
            <person name="Nagahari K."/>
            <person name="Murakami K."/>
            <person name="Yasuda T."/>
            <person name="Iwayanagi T."/>
            <person name="Wagatsuma M."/>
            <person name="Shiratori A."/>
            <person name="Sudo H."/>
            <person name="Hosoiri T."/>
            <person name="Kaku Y."/>
            <person name="Kodaira H."/>
            <person name="Kondo H."/>
            <person name="Sugawara M."/>
            <person name="Takahashi M."/>
            <person name="Kanda K."/>
            <person name="Yokoi T."/>
            <person name="Furuya T."/>
            <person name="Kikkawa E."/>
            <person name="Omura Y."/>
            <person name="Abe K."/>
            <person name="Kamihara K."/>
            <person name="Katsuta N."/>
            <person name="Sato K."/>
            <person name="Tanikawa M."/>
            <person name="Yamazaki M."/>
            <person name="Ninomiya K."/>
            <person name="Ishibashi T."/>
            <person name="Yamashita H."/>
            <person name="Murakawa K."/>
            <person name="Fujimori K."/>
            <person name="Tanai H."/>
            <person name="Kimata M."/>
            <person name="Watanabe M."/>
            <person name="Hiraoka S."/>
            <person name="Chiba Y."/>
            <person name="Ishida S."/>
            <person name="Ono Y."/>
            <person name="Takiguchi S."/>
            <person name="Watanabe S."/>
            <person name="Yosida M."/>
            <person name="Hotuta T."/>
            <person name="Kusano J."/>
            <person name="Kanehori K."/>
            <person name="Takahashi-Fujii A."/>
            <person name="Hara H."/>
            <person name="Tanase T.-O."/>
            <person name="Nomura Y."/>
            <person name="Togiya S."/>
            <person name="Komai F."/>
            <person name="Hara R."/>
            <person name="Takeuchi K."/>
            <person name="Arita M."/>
            <person name="Imose N."/>
            <person name="Musashino K."/>
            <person name="Yuuki H."/>
            <person name="Oshima A."/>
            <person name="Sasaki N."/>
            <person name="Aotsuka S."/>
            <person name="Yoshikawa Y."/>
            <person name="Matsunawa H."/>
            <person name="Ichihara T."/>
            <person name="Shiohata N."/>
            <person name="Sano S."/>
            <person name="Moriya S."/>
            <person name="Momiyama H."/>
            <person name="Satoh N."/>
            <person name="Takami S."/>
            <person name="Terashima Y."/>
            <person name="Suzuki O."/>
            <person name="Nakagawa S."/>
            <person name="Senoh A."/>
            <person name="Mizoguchi H."/>
            <person name="Goto Y."/>
            <person name="Shimizu F."/>
            <person name="Wakebe H."/>
            <person name="Hishigaki H."/>
            <person name="Watanabe T."/>
            <person name="Sugiyama A."/>
            <person name="Takemoto M."/>
            <person name="Kawakami B."/>
            <person name="Yamazaki M."/>
            <person name="Watanabe K."/>
            <person name="Kumagai A."/>
            <person name="Itakura S."/>
            <person name="Fukuzumi Y."/>
            <person name="Fujimori Y."/>
            <person name="Komiyama M."/>
            <person name="Tashiro H."/>
            <person name="Tanigami A."/>
            <person name="Fujiwara T."/>
            <person name="Ono T."/>
            <person name="Yamada K."/>
            <person name="Fujii Y."/>
            <person name="Ozaki K."/>
            <person name="Hirao M."/>
            <person name="Ohmori Y."/>
            <person name="Kawabata A."/>
            <person name="Hikiji T."/>
            <person name="Kobatake N."/>
            <person name="Inagaki H."/>
            <person name="Ikema Y."/>
            <person name="Okamoto S."/>
            <person name="Okitani R."/>
            <person name="Kawakami T."/>
            <person name="Noguchi S."/>
            <person name="Itoh T."/>
            <person name="Shigeta K."/>
            <person name="Senba T."/>
            <person name="Matsumura K."/>
            <person name="Nakajima Y."/>
            <person name="Mizuno T."/>
            <person name="Morinaga M."/>
            <person name="Sasaki M."/>
            <person name="Togashi T."/>
            <person name="Oyama M."/>
            <person name="Hata H."/>
            <person name="Watanabe M."/>
            <person name="Komatsu T."/>
            <person name="Mizushima-Sugano J."/>
            <person name="Satoh T."/>
            <person name="Shirai Y."/>
            <person name="Takahashi Y."/>
            <person name="Nakagawa K."/>
            <person name="Okumura K."/>
            <person name="Nagase T."/>
            <person name="Nomura N."/>
            <person name="Kikuchi H."/>
            <person name="Masuho Y."/>
            <person name="Yamashita R."/>
            <person name="Nakai K."/>
            <person name="Yada T."/>
            <person name="Nakamura Y."/>
            <person name="Ohara O."/>
            <person name="Isogai T."/>
            <person name="Sugano S."/>
        </authorList>
    </citation>
    <scope>NUCLEOTIDE SEQUENCE [LARGE SCALE MRNA] (ISOFORM 1)</scope>
</reference>
<reference key="4">
    <citation type="journal article" date="2005" name="Nature">
        <title>The DNA sequence of the human X chromosome.</title>
        <authorList>
            <person name="Ross M.T."/>
            <person name="Grafham D.V."/>
            <person name="Coffey A.J."/>
            <person name="Scherer S."/>
            <person name="McLay K."/>
            <person name="Muzny D."/>
            <person name="Platzer M."/>
            <person name="Howell G.R."/>
            <person name="Burrows C."/>
            <person name="Bird C.P."/>
            <person name="Frankish A."/>
            <person name="Lovell F.L."/>
            <person name="Howe K.L."/>
            <person name="Ashurst J.L."/>
            <person name="Fulton R.S."/>
            <person name="Sudbrak R."/>
            <person name="Wen G."/>
            <person name="Jones M.C."/>
            <person name="Hurles M.E."/>
            <person name="Andrews T.D."/>
            <person name="Scott C.E."/>
            <person name="Searle S."/>
            <person name="Ramser J."/>
            <person name="Whittaker A."/>
            <person name="Deadman R."/>
            <person name="Carter N.P."/>
            <person name="Hunt S.E."/>
            <person name="Chen R."/>
            <person name="Cree A."/>
            <person name="Gunaratne P."/>
            <person name="Havlak P."/>
            <person name="Hodgson A."/>
            <person name="Metzker M.L."/>
            <person name="Richards S."/>
            <person name="Scott G."/>
            <person name="Steffen D."/>
            <person name="Sodergren E."/>
            <person name="Wheeler D.A."/>
            <person name="Worley K.C."/>
            <person name="Ainscough R."/>
            <person name="Ambrose K.D."/>
            <person name="Ansari-Lari M.A."/>
            <person name="Aradhya S."/>
            <person name="Ashwell R.I."/>
            <person name="Babbage A.K."/>
            <person name="Bagguley C.L."/>
            <person name="Ballabio A."/>
            <person name="Banerjee R."/>
            <person name="Barker G.E."/>
            <person name="Barlow K.F."/>
            <person name="Barrett I.P."/>
            <person name="Bates K.N."/>
            <person name="Beare D.M."/>
            <person name="Beasley H."/>
            <person name="Beasley O."/>
            <person name="Beck A."/>
            <person name="Bethel G."/>
            <person name="Blechschmidt K."/>
            <person name="Brady N."/>
            <person name="Bray-Allen S."/>
            <person name="Bridgeman A.M."/>
            <person name="Brown A.J."/>
            <person name="Brown M.J."/>
            <person name="Bonnin D."/>
            <person name="Bruford E.A."/>
            <person name="Buhay C."/>
            <person name="Burch P."/>
            <person name="Burford D."/>
            <person name="Burgess J."/>
            <person name="Burrill W."/>
            <person name="Burton J."/>
            <person name="Bye J.M."/>
            <person name="Carder C."/>
            <person name="Carrel L."/>
            <person name="Chako J."/>
            <person name="Chapman J.C."/>
            <person name="Chavez D."/>
            <person name="Chen E."/>
            <person name="Chen G."/>
            <person name="Chen Y."/>
            <person name="Chen Z."/>
            <person name="Chinault C."/>
            <person name="Ciccodicola A."/>
            <person name="Clark S.Y."/>
            <person name="Clarke G."/>
            <person name="Clee C.M."/>
            <person name="Clegg S."/>
            <person name="Clerc-Blankenburg K."/>
            <person name="Clifford K."/>
            <person name="Cobley V."/>
            <person name="Cole C.G."/>
            <person name="Conquer J.S."/>
            <person name="Corby N."/>
            <person name="Connor R.E."/>
            <person name="David R."/>
            <person name="Davies J."/>
            <person name="Davis C."/>
            <person name="Davis J."/>
            <person name="Delgado O."/>
            <person name="Deshazo D."/>
            <person name="Dhami P."/>
            <person name="Ding Y."/>
            <person name="Dinh H."/>
            <person name="Dodsworth S."/>
            <person name="Draper H."/>
            <person name="Dugan-Rocha S."/>
            <person name="Dunham A."/>
            <person name="Dunn M."/>
            <person name="Durbin K.J."/>
            <person name="Dutta I."/>
            <person name="Eades T."/>
            <person name="Ellwood M."/>
            <person name="Emery-Cohen A."/>
            <person name="Errington H."/>
            <person name="Evans K.L."/>
            <person name="Faulkner L."/>
            <person name="Francis F."/>
            <person name="Frankland J."/>
            <person name="Fraser A.E."/>
            <person name="Galgoczy P."/>
            <person name="Gilbert J."/>
            <person name="Gill R."/>
            <person name="Gloeckner G."/>
            <person name="Gregory S.G."/>
            <person name="Gribble S."/>
            <person name="Griffiths C."/>
            <person name="Grocock R."/>
            <person name="Gu Y."/>
            <person name="Gwilliam R."/>
            <person name="Hamilton C."/>
            <person name="Hart E.A."/>
            <person name="Hawes A."/>
            <person name="Heath P.D."/>
            <person name="Heitmann K."/>
            <person name="Hennig S."/>
            <person name="Hernandez J."/>
            <person name="Hinzmann B."/>
            <person name="Ho S."/>
            <person name="Hoffs M."/>
            <person name="Howden P.J."/>
            <person name="Huckle E.J."/>
            <person name="Hume J."/>
            <person name="Hunt P.J."/>
            <person name="Hunt A.R."/>
            <person name="Isherwood J."/>
            <person name="Jacob L."/>
            <person name="Johnson D."/>
            <person name="Jones S."/>
            <person name="de Jong P.J."/>
            <person name="Joseph S.S."/>
            <person name="Keenan S."/>
            <person name="Kelly S."/>
            <person name="Kershaw J.K."/>
            <person name="Khan Z."/>
            <person name="Kioschis P."/>
            <person name="Klages S."/>
            <person name="Knights A.J."/>
            <person name="Kosiura A."/>
            <person name="Kovar-Smith C."/>
            <person name="Laird G.K."/>
            <person name="Langford C."/>
            <person name="Lawlor S."/>
            <person name="Leversha M."/>
            <person name="Lewis L."/>
            <person name="Liu W."/>
            <person name="Lloyd C."/>
            <person name="Lloyd D.M."/>
            <person name="Loulseged H."/>
            <person name="Loveland J.E."/>
            <person name="Lovell J.D."/>
            <person name="Lozado R."/>
            <person name="Lu J."/>
            <person name="Lyne R."/>
            <person name="Ma J."/>
            <person name="Maheshwari M."/>
            <person name="Matthews L.H."/>
            <person name="McDowall J."/>
            <person name="McLaren S."/>
            <person name="McMurray A."/>
            <person name="Meidl P."/>
            <person name="Meitinger T."/>
            <person name="Milne S."/>
            <person name="Miner G."/>
            <person name="Mistry S.L."/>
            <person name="Morgan M."/>
            <person name="Morris S."/>
            <person name="Mueller I."/>
            <person name="Mullikin J.C."/>
            <person name="Nguyen N."/>
            <person name="Nordsiek G."/>
            <person name="Nyakatura G."/>
            <person name="O'dell C.N."/>
            <person name="Okwuonu G."/>
            <person name="Palmer S."/>
            <person name="Pandian R."/>
            <person name="Parker D."/>
            <person name="Parrish J."/>
            <person name="Pasternak S."/>
            <person name="Patel D."/>
            <person name="Pearce A.V."/>
            <person name="Pearson D.M."/>
            <person name="Pelan S.E."/>
            <person name="Perez L."/>
            <person name="Porter K.M."/>
            <person name="Ramsey Y."/>
            <person name="Reichwald K."/>
            <person name="Rhodes S."/>
            <person name="Ridler K.A."/>
            <person name="Schlessinger D."/>
            <person name="Schueler M.G."/>
            <person name="Sehra H.K."/>
            <person name="Shaw-Smith C."/>
            <person name="Shen H."/>
            <person name="Sheridan E.M."/>
            <person name="Shownkeen R."/>
            <person name="Skuce C.D."/>
            <person name="Smith M.L."/>
            <person name="Sotheran E.C."/>
            <person name="Steingruber H.E."/>
            <person name="Steward C.A."/>
            <person name="Storey R."/>
            <person name="Swann R.M."/>
            <person name="Swarbreck D."/>
            <person name="Tabor P.E."/>
            <person name="Taudien S."/>
            <person name="Taylor T."/>
            <person name="Teague B."/>
            <person name="Thomas K."/>
            <person name="Thorpe A."/>
            <person name="Timms K."/>
            <person name="Tracey A."/>
            <person name="Trevanion S."/>
            <person name="Tromans A.C."/>
            <person name="d'Urso M."/>
            <person name="Verduzco D."/>
            <person name="Villasana D."/>
            <person name="Waldron L."/>
            <person name="Wall M."/>
            <person name="Wang Q."/>
            <person name="Warren J."/>
            <person name="Warry G.L."/>
            <person name="Wei X."/>
            <person name="West A."/>
            <person name="Whitehead S.L."/>
            <person name="Whiteley M.N."/>
            <person name="Wilkinson J.E."/>
            <person name="Willey D.L."/>
            <person name="Williams G."/>
            <person name="Williams L."/>
            <person name="Williamson A."/>
            <person name="Williamson H."/>
            <person name="Wilming L."/>
            <person name="Woodmansey R.L."/>
            <person name="Wray P.W."/>
            <person name="Yen J."/>
            <person name="Zhang J."/>
            <person name="Zhou J."/>
            <person name="Zoghbi H."/>
            <person name="Zorilla S."/>
            <person name="Buck D."/>
            <person name="Reinhardt R."/>
            <person name="Poustka A."/>
            <person name="Rosenthal A."/>
            <person name="Lehrach H."/>
            <person name="Meindl A."/>
            <person name="Minx P.J."/>
            <person name="Hillier L.W."/>
            <person name="Willard H.F."/>
            <person name="Wilson R.K."/>
            <person name="Waterston R.H."/>
            <person name="Rice C.M."/>
            <person name="Vaudin M."/>
            <person name="Coulson A."/>
            <person name="Nelson D.L."/>
            <person name="Weinstock G."/>
            <person name="Sulston J.E."/>
            <person name="Durbin R.M."/>
            <person name="Hubbard T."/>
            <person name="Gibbs R.A."/>
            <person name="Beck S."/>
            <person name="Rogers J."/>
            <person name="Bentley D.R."/>
        </authorList>
    </citation>
    <scope>NUCLEOTIDE SEQUENCE [LARGE SCALE GENOMIC DNA]</scope>
</reference>
<reference key="5">
    <citation type="submission" date="2005-07" db="EMBL/GenBank/DDBJ databases">
        <authorList>
            <person name="Mural R.J."/>
            <person name="Istrail S."/>
            <person name="Sutton G.G."/>
            <person name="Florea L."/>
            <person name="Halpern A.L."/>
            <person name="Mobarry C.M."/>
            <person name="Lippert R."/>
            <person name="Walenz B."/>
            <person name="Shatkay H."/>
            <person name="Dew I."/>
            <person name="Miller J.R."/>
            <person name="Flanigan M.J."/>
            <person name="Edwards N.J."/>
            <person name="Bolanos R."/>
            <person name="Fasulo D."/>
            <person name="Halldorsson B.V."/>
            <person name="Hannenhalli S."/>
            <person name="Turner R."/>
            <person name="Yooseph S."/>
            <person name="Lu F."/>
            <person name="Nusskern D.R."/>
            <person name="Shue B.C."/>
            <person name="Zheng X.H."/>
            <person name="Zhong F."/>
            <person name="Delcher A.L."/>
            <person name="Huson D.H."/>
            <person name="Kravitz S.A."/>
            <person name="Mouchard L."/>
            <person name="Reinert K."/>
            <person name="Remington K.A."/>
            <person name="Clark A.G."/>
            <person name="Waterman M.S."/>
            <person name="Eichler E.E."/>
            <person name="Adams M.D."/>
            <person name="Hunkapiller M.W."/>
            <person name="Myers E.W."/>
            <person name="Venter J.C."/>
        </authorList>
    </citation>
    <scope>NUCLEOTIDE SEQUENCE [LARGE SCALE GENOMIC DNA]</scope>
</reference>
<reference key="6">
    <citation type="journal article" date="2004" name="Genome Res.">
        <title>The status, quality, and expansion of the NIH full-length cDNA project: the Mammalian Gene Collection (MGC).</title>
        <authorList>
            <consortium name="The MGC Project Team"/>
        </authorList>
    </citation>
    <scope>NUCLEOTIDE SEQUENCE [LARGE SCALE MRNA] (ISOFORM 1)</scope>
    <source>
        <tissue>Lymph</tissue>
    </source>
</reference>
<reference key="7">
    <citation type="journal article" date="2004" name="Am. J. Hum. Genet.">
        <title>Mutations in the FTSJ1 gene coding for a novel S-adenosylmethionine-binding protein cause nonsyndromic X-linked mental retardation.</title>
        <authorList>
            <person name="Freude K."/>
            <person name="Hoffmann K."/>
            <person name="Jensen L.-R."/>
            <person name="Delatycki M.B."/>
            <person name="des Portes V."/>
            <person name="Moser B."/>
            <person name="Hamel B.C.J."/>
            <person name="van Bokhoven H."/>
            <person name="Moraine C."/>
            <person name="Fryns J.-P."/>
            <person name="Chelly J."/>
            <person name="Gecz J."/>
            <person name="Lenzner S."/>
            <person name="Kalscheuer V.M."/>
            <person name="Ropers H.-H."/>
        </authorList>
    </citation>
    <scope>INVOLVEMENT IN XLID9</scope>
    <scope>TISSUE SPECIFICITY</scope>
</reference>
<reference key="8">
    <citation type="journal article" date="2004" name="J. Med. Genet.">
        <title>A splice site mutation in the methyltransferase gene FTSJ1 in Xp11.23 is associated with non-syndromic mental retardation in a large Belgian family (MRX9).</title>
        <authorList>
            <person name="Ramser J."/>
            <person name="Winnepenninckx B."/>
            <person name="Lenski C."/>
            <person name="Errijgers V."/>
            <person name="Platzer M."/>
            <person name="Schwartz C.E."/>
            <person name="Meindl A."/>
            <person name="Kooy R.F."/>
        </authorList>
    </citation>
    <scope>INVOLVEMENT IN XLID9</scope>
    <scope>TISSUE SPECIFICITY</scope>
</reference>
<reference key="9">
    <citation type="journal article" date="2008" name="Am. J. Med. Genet. B Neuropsychiatr. Genet.">
        <title>A loss-of-function mutation in the FTSJ1 gene causes nonsyndromic X-linked mental retardation in a Japanese family.</title>
        <authorList>
            <consortium name="Japanese Mental Retardation Consortium"/>
            <person name="Takano K."/>
            <person name="Nakagawa E."/>
            <person name="Inoue K."/>
            <person name="Kamada F."/>
            <person name="Kure S."/>
            <person name="Goto Y."/>
        </authorList>
    </citation>
    <scope>INVOLVEMENT IN XLID9</scope>
</reference>
<reference key="10">
    <citation type="journal article" date="2008" name="J. Hum. Genet.">
        <title>Positive association of the FTSJ1 gene polymorphisms with nonsyndromic X-linked mental retardation in young Chinese male subjects.</title>
        <authorList>
            <person name="Dai L."/>
            <person name="Xing L."/>
            <person name="Gong P."/>
            <person name="Zhang K."/>
            <person name="Gao X."/>
            <person name="Zheng Z."/>
            <person name="Zhou J."/>
            <person name="Guo Y."/>
            <person name="Guo S."/>
            <person name="Zhang F."/>
        </authorList>
    </citation>
    <scope>INVOLVEMENT IN XLID9</scope>
</reference>
<reference key="11">
    <citation type="journal article" date="2008" name="J. Neurogenet.">
        <title>Genetic variations in FTSJ1 influence cognitive ability in young males in the Chinese Han population.</title>
        <authorList>
            <person name="Gong P."/>
            <person name="Li J."/>
            <person name="Dai L."/>
            <person name="Zhang K."/>
            <person name="Zheng Z."/>
            <person name="Gao X."/>
            <person name="Zhang F."/>
        </authorList>
    </citation>
    <scope>INVOLVEMENT IN XLID9</scope>
</reference>
<reference key="12">
    <citation type="journal article" date="2008" name="Mol. Cell">
        <title>Kinase-selective enrichment enables quantitative phosphoproteomics of the kinome across the cell cycle.</title>
        <authorList>
            <person name="Daub H."/>
            <person name="Olsen J.V."/>
            <person name="Bairlein M."/>
            <person name="Gnad F."/>
            <person name="Oppermann F.S."/>
            <person name="Korner R."/>
            <person name="Greff Z."/>
            <person name="Keri G."/>
            <person name="Stemmann O."/>
            <person name="Mann M."/>
        </authorList>
    </citation>
    <scope>IDENTIFICATION BY MASS SPECTROMETRY [LARGE SCALE ANALYSIS]</scope>
    <source>
        <tissue>Cervix carcinoma</tissue>
    </source>
</reference>
<reference key="13">
    <citation type="journal article" date="2008" name="Proc. Natl. Acad. Sci. U.S.A.">
        <title>A quantitative atlas of mitotic phosphorylation.</title>
        <authorList>
            <person name="Dephoure N."/>
            <person name="Zhou C."/>
            <person name="Villen J."/>
            <person name="Beausoleil S.A."/>
            <person name="Bakalarski C.E."/>
            <person name="Elledge S.J."/>
            <person name="Gygi S.P."/>
        </authorList>
    </citation>
    <scope>IDENTIFICATION BY MASS SPECTROMETRY [LARGE SCALE ANALYSIS]</scope>
    <source>
        <tissue>Cervix carcinoma</tissue>
    </source>
</reference>
<reference key="14">
    <citation type="journal article" date="2009" name="Anal. Chem.">
        <title>Lys-N and trypsin cover complementary parts of the phosphoproteome in a refined SCX-based approach.</title>
        <authorList>
            <person name="Gauci S."/>
            <person name="Helbig A.O."/>
            <person name="Slijper M."/>
            <person name="Krijgsveld J."/>
            <person name="Heck A.J."/>
            <person name="Mohammed S."/>
        </authorList>
    </citation>
    <scope>IDENTIFICATION BY MASS SPECTROMETRY [LARGE SCALE ANALYSIS]</scope>
</reference>
<reference key="15">
    <citation type="journal article" date="2011" name="BMC Syst. Biol.">
        <title>Initial characterization of the human central proteome.</title>
        <authorList>
            <person name="Burkard T.R."/>
            <person name="Planyavsky M."/>
            <person name="Kaupe I."/>
            <person name="Breitwieser F.P."/>
            <person name="Buerckstuemmer T."/>
            <person name="Bennett K.L."/>
            <person name="Superti-Furga G."/>
            <person name="Colinge J."/>
        </authorList>
    </citation>
    <scope>IDENTIFICATION BY MASS SPECTROMETRY [LARGE SCALE ANALYSIS]</scope>
</reference>
<reference key="16">
    <citation type="journal article" date="2013" name="J. Proteome Res.">
        <title>Toward a comprehensive characterization of a human cancer cell phosphoproteome.</title>
        <authorList>
            <person name="Zhou H."/>
            <person name="Di Palma S."/>
            <person name="Preisinger C."/>
            <person name="Peng M."/>
            <person name="Polat A.N."/>
            <person name="Heck A.J."/>
            <person name="Mohammed S."/>
        </authorList>
    </citation>
    <scope>PHOSPHORYLATION [LARGE SCALE ANALYSIS] AT SER-271</scope>
    <scope>IDENTIFICATION BY MASS SPECTROMETRY [LARGE SCALE ANALYSIS]</scope>
    <source>
        <tissue>Erythroleukemia</tissue>
    </source>
</reference>
<reference key="17">
    <citation type="journal article" date="2015" name="RNA">
        <title>Conservation of an intricate circuit for crucial modifications of the tRNAPhe anticodon loop in eukaryotes.</title>
        <authorList>
            <person name="Guy M.P."/>
            <person name="Phizicky E.M."/>
        </authorList>
    </citation>
    <scope>FUNCTION</scope>
</reference>
<reference key="18">
    <citation type="journal article" date="2020" name="Cell Death Dis.">
        <title>FTSJ1 regulates tRNA 2'-O-methyladenosine modification and suppresses the malignancy of NSCLC via inhibiting DRAM1 expression.</title>
        <authorList>
            <person name="He Q."/>
            <person name="Yang L."/>
            <person name="Gao K."/>
            <person name="Ding P."/>
            <person name="Chen Q."/>
            <person name="Xiong J."/>
            <person name="Yang W."/>
            <person name="Song Y."/>
            <person name="Wang L."/>
            <person name="Wang Y."/>
            <person name="Ling L."/>
            <person name="Wu W."/>
            <person name="Yan J."/>
            <person name="Zou P."/>
            <person name="Chen Y."/>
            <person name="Zhai R."/>
        </authorList>
    </citation>
    <scope>FUNCTION</scope>
</reference>
<reference key="19">
    <citation type="journal article" date="2020" name="Cell Death Dis.">
        <authorList>
            <person name="He Q."/>
            <person name="Yang L."/>
            <person name="Gao K."/>
            <person name="Ding P."/>
            <person name="Chen Q."/>
            <person name="Xiong J."/>
            <person name="Yang W."/>
            <person name="Song Y."/>
            <person name="Wang L."/>
            <person name="Wang Y."/>
            <person name="Ling L."/>
            <person name="Wu W."/>
            <person name="Yan J."/>
            <person name="Zou P."/>
            <person name="Chen Y."/>
            <person name="Zhai R."/>
        </authorList>
    </citation>
    <scope>ERRATUM OF PUBMED:32393790</scope>
</reference>
<reference key="20">
    <citation type="journal article" date="2020" name="EMBO Rep.">
        <title>Intellectual disability-associated gene ftsj1 is responsible for 2'-O-methylation of specific tRNAs.</title>
        <authorList>
            <person name="Li J."/>
            <person name="Wang Y.N."/>
            <person name="Xu B.S."/>
            <person name="Liu Y.P."/>
            <person name="Zhou M."/>
            <person name="Long T."/>
            <person name="Li H."/>
            <person name="Dong H."/>
            <person name="Nie Y."/>
            <person name="Chen P.R."/>
            <person name="Wang E.D."/>
            <person name="Liu R.J."/>
        </authorList>
    </citation>
    <scope>FUNCTION</scope>
    <scope>CATALYTIC ACTIVITY</scope>
    <scope>INTERACTION WITH WDR6</scope>
    <scope>SUBCELLULAR LOCATION</scope>
</reference>
<reference key="21">
    <citation type="journal article" date="2020" name="Nat. Commun.">
        <title>2,6-Diaminopurine as a highly potent corrector of UGA nonsense mutations.</title>
        <authorList>
            <person name="Trzaska C."/>
            <person name="Amand S."/>
            <person name="Bailly C."/>
            <person name="Leroy C."/>
            <person name="Marchand V."/>
            <person name="Duvernois-Berthet E."/>
            <person name="Saliou J.M."/>
            <person name="Benhabiles H."/>
            <person name="Werkmeister E."/>
            <person name="Chassat T."/>
            <person name="Guilbert R."/>
            <person name="Hannebique D."/>
            <person name="Mouray A."/>
            <person name="Copin M.C."/>
            <person name="Moreau P.A."/>
            <person name="Adriaenssens E."/>
            <person name="Kulozik A."/>
            <person name="Westhof E."/>
            <person name="Tulasne D."/>
            <person name="Motorin Y."/>
            <person name="Rebuffat S."/>
            <person name="Lejeune F."/>
        </authorList>
    </citation>
    <scope>FUNCTION</scope>
    <scope>ACTIVITY REGULATION</scope>
</reference>
<reference key="22">
    <citation type="journal article" date="2021" name="Sci. Adv.">
        <title>Loss of Ftsj1 perturbs codon-specific translation efficiency in the brain and is associated with X-linked intellectual disability.</title>
        <authorList>
            <person name="Nagayoshi Y."/>
            <person name="Chujo T."/>
            <person name="Hirata S."/>
            <person name="Nakatsuka H."/>
            <person name="Chen C.W."/>
            <person name="Takakura M."/>
            <person name="Miyauchi K."/>
            <person name="Ikeuchi Y."/>
            <person name="Carlyle B.C."/>
            <person name="Kitchen R.R."/>
            <person name="Suzuki T."/>
            <person name="Katsuoka F."/>
            <person name="Yamamoto M."/>
            <person name="Goto Y."/>
            <person name="Tanaka M."/>
            <person name="Natsume K."/>
            <person name="Nairn A.C."/>
            <person name="Suzuki T."/>
            <person name="Tomizawa K."/>
            <person name="Wei F.Y."/>
        </authorList>
    </citation>
    <scope>FUNCTION</scope>
    <scope>CATALYTIC ACTIVITY</scope>
    <scope>INTERACTION WITH WDR6</scope>
    <scope>INVOLVEMENT IN XLID9</scope>
</reference>
<reference key="23">
    <citation type="journal article" date="2015" name="Hum. Mutat.">
        <title>Defects in tRNA Anticodon Loop 2'-O-Methylation Are Implicated in Nonsyndromic X-Linked Intellectual Disability due to Mutations in FTSJ1.</title>
        <authorList>
            <person name="Guy M.P."/>
            <person name="Shaw M."/>
            <person name="Weiner C.L."/>
            <person name="Hobson L."/>
            <person name="Stark Z."/>
            <person name="Rose K."/>
            <person name="Kalscheuer V.M."/>
            <person name="Gecz J."/>
            <person name="Phizicky E.M."/>
        </authorList>
    </citation>
    <scope>CHARACTERIZATION OF VARIANT XLID9 PRO-26</scope>
    <scope>FUNCTION</scope>
    <scope>INVOLVEMENT IN XLID9</scope>
</reference>
<reference key="24">
    <citation type="journal article" date="2023" name="Life. Sci Alliance">
        <title>The ribose methylation enzyme FTSJ1 has a conserved role in neuron morphology and learning performance.</title>
        <authorList>
            <person name="Brazane M."/>
            <person name="Dimitrova D.G."/>
            <person name="Pigeon J."/>
            <person name="Paolantoni C."/>
            <person name="Ye T."/>
            <person name="Marchand V."/>
            <person name="Da Silva B."/>
            <person name="Schaefer E."/>
            <person name="Angelova M.T."/>
            <person name="Stark Z."/>
            <person name="Delatycki M."/>
            <person name="Dudding-Byth T."/>
            <person name="Gecz J."/>
            <person name="Placais P.Y."/>
            <person name="Teysset L."/>
            <person name="Preat T."/>
            <person name="Piton A."/>
            <person name="Hassan B.A."/>
            <person name="Roignant J.Y."/>
            <person name="Motorin Y."/>
            <person name="Carre C."/>
        </authorList>
    </citation>
    <scope>CHARACTERIZATION OF VARIANT XLID9 PRO-26</scope>
    <scope>FUNCTION</scope>
    <scope>CATALYTIC ACTIVITY</scope>
    <scope>INVOLVEMENT IN XLID9</scope>
</reference>
<comment type="function">
    <text evidence="7 8 9 10 11 12 13">Methylates the 2'-O-ribose of nucleotides at positions 32 and 34 of the tRNA anticodon loop of substrate tRNAs (PubMed:25404562, PubMed:26310293, PubMed:32198346, PubMed:32558197, PubMed:33771871, PubMed:36720500). Requisite for faithful cytoplasmic translation (PubMed:32393790). Requires THADA for methylation of the nucleotide at position 32 of the anticodon loop of substrate tRNAs (PubMed:25404562, PubMed:26310293). Requires WDR6 for methylation of the nucleotide at position 34 of the anticodon loop of substrate tRNAs (PubMed:32558197, PubMed:33771871). Promotes translation efficiency of the UUU codon (PubMed:32558197). Plays a role in neurogenesis (PubMed:36720500). Required for expression of genes involved in neurogenesis, mitochondrial translation and energy generation, and lipid biosynthesis (PubMed:33771871, PubMed:36720500). Requisite for RNA-mediated gene silencing (PubMed:36720500). May modify position 32 in tRNA(Arg(ACG)), tRNA(Arg(CCG)), tRNA(Arg(UCG)), tRNA(Cys(GCA)), tRNA(Cys(ACA)), tRNA(Gln(CUG)), tRNA(Gln(UUG)), tRNA(Gly(CCC)), tRNA(Leu(CAG))/tRNA(Leu(CAA)), tRNA(Leu(A/IAG)), tRNA(Leu(UAG)), tRNA(Phe(GAA)), tRNA(Pro(AGG))/tRNA(Pro(CGG))/tRNA(Pro(UGG)) and tRNA(Trp(CCA)), and position 34 in tRNA(Phe(GAA)), tRNA(Leu(CAA)), tRNA(Sec(UCA)), and tRNA(Trp(CCA)) (PubMed:26310293, PubMed:32198346, PubMed:32558197, PubMed:33771871, PubMed:36720500).</text>
</comment>
<comment type="catalytic activity">
    <reaction evidence="1 11 12 16">
        <text>cytidine(32)/guanosine(34) in tRNA + 2 S-adenosyl-L-methionine = 2'-O-methylcytidine(32)/2'-O-methylguanosine(34) in tRNA + 2 S-adenosyl-L-homocysteine + 2 H(+)</text>
        <dbReference type="Rhea" id="RHEA:42396"/>
        <dbReference type="Rhea" id="RHEA-COMP:10246"/>
        <dbReference type="Rhea" id="RHEA-COMP:10247"/>
        <dbReference type="ChEBI" id="CHEBI:15378"/>
        <dbReference type="ChEBI" id="CHEBI:57856"/>
        <dbReference type="ChEBI" id="CHEBI:59789"/>
        <dbReference type="ChEBI" id="CHEBI:74269"/>
        <dbReference type="ChEBI" id="CHEBI:74445"/>
        <dbReference type="ChEBI" id="CHEBI:74495"/>
        <dbReference type="ChEBI" id="CHEBI:82748"/>
        <dbReference type="EC" id="2.1.1.205"/>
    </reaction>
</comment>
<comment type="activity regulation">
    <text evidence="9">Inhibited by 2,6-diaminopurine (DAP); inhibition promotes UGA stop-codon readthrough during translation by misincorporation of tRNA(Trp) in the nascent polypeptide.</text>
</comment>
<comment type="subunit">
    <text evidence="11 12">Interacts with WDR6; the interaction is direct, and required for 2'-O-methylation of position 34 in substrate tRNAs.</text>
</comment>
<comment type="interaction">
    <interactant intactId="EBI-1055987">
        <id>Q9UET6</id>
    </interactant>
    <interactant intactId="EBI-11156432">
        <id>Q9Y5P4-2</id>
        <label>CERT1</label>
    </interactant>
    <organismsDiffer>false</organismsDiffer>
    <experiments>3</experiments>
</comment>
<comment type="subcellular location">
    <subcellularLocation>
        <location evidence="11">Cytoplasm</location>
    </subcellularLocation>
    <subcellularLocation>
        <location evidence="11">Nucleus</location>
    </subcellularLocation>
    <text evidence="11">Predominantly cytoplasmic.</text>
</comment>
<comment type="alternative products">
    <event type="alternative splicing"/>
    <isoform>
        <id>Q9UET6-1</id>
        <name>1</name>
        <sequence type="displayed"/>
    </isoform>
    <isoform>
        <id>Q9UET6-2</id>
        <name>2</name>
        <sequence type="described" ref="VSP_041419"/>
    </isoform>
</comment>
<comment type="tissue specificity">
    <text evidence="2 3">Found in fetal brain, lung, liver and kidney (PubMed:15162322). Widely expressed in adult tissue; with high expression in heart and liver, lower expression in skeletal muscle, kidney, and pancreas and also lowly expressed in brain and lung (PubMed:15342698). In the adult brain, expressed in amygdala, caudate nucleus, corpus callosum, hippocampus and thalamus (PubMed:15162322).</text>
</comment>
<comment type="disease" evidence="2 3 4 5 6 8 12 13">
    <disease id="DI-00729">
        <name>Intellectual developmental disorder, X-linked 9</name>
        <acronym>XLID9</acronym>
        <description>A disorder characterized by significantly below average general intellectual functioning associated with impairments in adaptive behavior and manifested during the developmental period. Intellectual deficiency is the only primary symptom of non-syndromic X-linked forms, while syndromic forms present with associated physical, neurological and/or psychiatric manifestations.</description>
        <dbReference type="MIM" id="309549"/>
    </disease>
    <text>The disease is caused by variants affecting the gene represented in this entry.</text>
</comment>
<comment type="similarity">
    <text evidence="1">Belongs to the class I-like SAM-binding methyltransferase superfamily. RNA methyltransferase RlmE family. TRM7 subfamily.</text>
</comment>
<organism>
    <name type="scientific">Homo sapiens</name>
    <name type="common">Human</name>
    <dbReference type="NCBI Taxonomy" id="9606"/>
    <lineage>
        <taxon>Eukaryota</taxon>
        <taxon>Metazoa</taxon>
        <taxon>Chordata</taxon>
        <taxon>Craniata</taxon>
        <taxon>Vertebrata</taxon>
        <taxon>Euteleostomi</taxon>
        <taxon>Mammalia</taxon>
        <taxon>Eutheria</taxon>
        <taxon>Euarchontoglires</taxon>
        <taxon>Primates</taxon>
        <taxon>Haplorrhini</taxon>
        <taxon>Catarrhini</taxon>
        <taxon>Hominidae</taxon>
        <taxon>Homo</taxon>
    </lineage>
</organism>
<sequence>MGRTSKDKRDVYYRLAKENGWRARSAFKLLQLDKEFQLFQGVTRAVDLCAAPGSWSQVLSQKIGGQGSGHVVAVDLQAMAPLPGVVQIQGDITQLSTAKEIIQHFKGCPADLVVCDGAPDVTGLHDVDEYMQAQLLLAALNIATHVLKPGGCFVAKIFRGRDVTLLYSQLQVFFSSVLCAKPRSSRNSSIEAFAVCQGYDPPEGFIPDLSKPLLDHSYDPDFNQLDGPTRIIVPFVTCGDLSSYDSDRSYPLDLEGGSEYKYTPPTQPPISPPYQEACTLKRKGQLAKEIRPQDCPISRVDTFPQPLAAPQCHTLLAPEMEDNEMSCSP</sequence>
<proteinExistence type="evidence at protein level"/>
<gene>
    <name evidence="1" type="primary">FTSJ1</name>
    <name type="ORF">JM23</name>
</gene>
<evidence type="ECO:0000255" key="1">
    <source>
        <dbReference type="HAMAP-Rule" id="MF_03162"/>
    </source>
</evidence>
<evidence type="ECO:0000269" key="2">
    <source>
    </source>
</evidence>
<evidence type="ECO:0000269" key="3">
    <source>
    </source>
</evidence>
<evidence type="ECO:0000269" key="4">
    <source>
    </source>
</evidence>
<evidence type="ECO:0000269" key="5">
    <source>
    </source>
</evidence>
<evidence type="ECO:0000269" key="6">
    <source>
    </source>
</evidence>
<evidence type="ECO:0000269" key="7">
    <source>
    </source>
</evidence>
<evidence type="ECO:0000269" key="8">
    <source>
    </source>
</evidence>
<evidence type="ECO:0000269" key="9">
    <source>
    </source>
</evidence>
<evidence type="ECO:0000269" key="10">
    <source>
    </source>
</evidence>
<evidence type="ECO:0000269" key="11">
    <source>
    </source>
</evidence>
<evidence type="ECO:0000269" key="12">
    <source>
    </source>
</evidence>
<evidence type="ECO:0000269" key="13">
    <source>
    </source>
</evidence>
<evidence type="ECO:0000303" key="14">
    <source ref="1"/>
</evidence>
<evidence type="ECO:0000305" key="15"/>
<evidence type="ECO:0000305" key="16">
    <source>
    </source>
</evidence>
<evidence type="ECO:0007744" key="17">
    <source>
    </source>
</evidence>
<accession>Q9UET6</accession>
<accession>B2RCJ0</accession>
<accession>O75670</accession>
<dbReference type="EC" id="2.1.1.205" evidence="1 11 12 16"/>
<dbReference type="EMBL" id="AF063015">
    <property type="protein sequence ID" value="AAC33734.1"/>
    <property type="molecule type" value="mRNA"/>
</dbReference>
<dbReference type="EMBL" id="AJ005892">
    <property type="protein sequence ID" value="CAA06749.1"/>
    <property type="molecule type" value="mRNA"/>
</dbReference>
<dbReference type="EMBL" id="AK315138">
    <property type="protein sequence ID" value="BAG37587.1"/>
    <property type="molecule type" value="mRNA"/>
</dbReference>
<dbReference type="EMBL" id="AF196972">
    <property type="status" value="NOT_ANNOTATED_CDS"/>
    <property type="molecule type" value="Genomic_DNA"/>
</dbReference>
<dbReference type="EMBL" id="CH471224">
    <property type="protein sequence ID" value="EAW50782.1"/>
    <property type="molecule type" value="Genomic_DNA"/>
</dbReference>
<dbReference type="EMBL" id="BC023584">
    <property type="protein sequence ID" value="AAH23584.1"/>
    <property type="molecule type" value="mRNA"/>
</dbReference>
<dbReference type="CCDS" id="CCDS14294.1">
    <molecule id="Q9UET6-1"/>
</dbReference>
<dbReference type="CCDS" id="CCDS14295.1">
    <molecule id="Q9UET6-2"/>
</dbReference>
<dbReference type="RefSeq" id="NP_001269086.1">
    <property type="nucleotide sequence ID" value="NM_001282157.1"/>
</dbReference>
<dbReference type="RefSeq" id="NP_036412.1">
    <molecule id="Q9UET6-1"/>
    <property type="nucleotide sequence ID" value="NM_012280.4"/>
</dbReference>
<dbReference type="RefSeq" id="NP_803188.1">
    <molecule id="Q9UET6-2"/>
    <property type="nucleotide sequence ID" value="NM_177439.3"/>
</dbReference>
<dbReference type="RefSeq" id="XP_005272652.1">
    <molecule id="Q9UET6-2"/>
    <property type="nucleotide sequence ID" value="XM_005272595.3"/>
</dbReference>
<dbReference type="RefSeq" id="XP_024308127.1">
    <molecule id="Q9UET6-1"/>
    <property type="nucleotide sequence ID" value="XM_024452359.2"/>
</dbReference>
<dbReference type="RefSeq" id="XP_054182713.1">
    <molecule id="Q9UET6-1"/>
    <property type="nucleotide sequence ID" value="XM_054326738.1"/>
</dbReference>
<dbReference type="RefSeq" id="XP_054182714.1">
    <molecule id="Q9UET6-2"/>
    <property type="nucleotide sequence ID" value="XM_054326739.1"/>
</dbReference>
<dbReference type="SMR" id="Q9UET6"/>
<dbReference type="BioGRID" id="117291">
    <property type="interactions" value="86"/>
</dbReference>
<dbReference type="FunCoup" id="Q9UET6">
    <property type="interactions" value="3111"/>
</dbReference>
<dbReference type="IntAct" id="Q9UET6">
    <property type="interactions" value="45"/>
</dbReference>
<dbReference type="MINT" id="Q9UET6"/>
<dbReference type="STRING" id="9606.ENSP00000326948"/>
<dbReference type="GlyGen" id="Q9UET6">
    <property type="glycosylation" value="1 site, 1 O-linked glycan (1 site)"/>
</dbReference>
<dbReference type="iPTMnet" id="Q9UET6"/>
<dbReference type="PhosphoSitePlus" id="Q9UET6"/>
<dbReference type="BioMuta" id="FTSJ1"/>
<dbReference type="DMDM" id="12643879"/>
<dbReference type="jPOST" id="Q9UET6"/>
<dbReference type="MassIVE" id="Q9UET6"/>
<dbReference type="PaxDb" id="9606-ENSP00000326948"/>
<dbReference type="PeptideAtlas" id="Q9UET6"/>
<dbReference type="ProteomicsDB" id="84153">
    <molecule id="Q9UET6-1"/>
</dbReference>
<dbReference type="ProteomicsDB" id="84154">
    <molecule id="Q9UET6-2"/>
</dbReference>
<dbReference type="Pumba" id="Q9UET6"/>
<dbReference type="Antibodypedia" id="445">
    <property type="antibodies" value="141 antibodies from 20 providers"/>
</dbReference>
<dbReference type="DNASU" id="24140"/>
<dbReference type="Ensembl" id="ENST00000019019.6">
    <molecule id="Q9UET6-2"/>
    <property type="protein sequence ID" value="ENSP00000019019.2"/>
    <property type="gene ID" value="ENSG00000068438.15"/>
</dbReference>
<dbReference type="Ensembl" id="ENST00000348411.3">
    <molecule id="Q9UET6-1"/>
    <property type="protein sequence ID" value="ENSP00000326948.2"/>
    <property type="gene ID" value="ENSG00000068438.15"/>
</dbReference>
<dbReference type="GeneID" id="24140"/>
<dbReference type="KEGG" id="hsa:24140"/>
<dbReference type="MANE-Select" id="ENST00000348411.3">
    <property type="protein sequence ID" value="ENSP00000326948.2"/>
    <property type="RefSeq nucleotide sequence ID" value="NM_012280.4"/>
    <property type="RefSeq protein sequence ID" value="NP_036412.1"/>
</dbReference>
<dbReference type="UCSC" id="uc004djn.3">
    <molecule id="Q9UET6-1"/>
    <property type="organism name" value="human"/>
</dbReference>
<dbReference type="AGR" id="HGNC:13254"/>
<dbReference type="CTD" id="24140"/>
<dbReference type="DisGeNET" id="24140"/>
<dbReference type="GeneCards" id="FTSJ1"/>
<dbReference type="HGNC" id="HGNC:13254">
    <property type="gene designation" value="FTSJ1"/>
</dbReference>
<dbReference type="HPA" id="ENSG00000068438">
    <property type="expression patterns" value="Low tissue specificity"/>
</dbReference>
<dbReference type="MalaCards" id="FTSJ1"/>
<dbReference type="MIM" id="300499">
    <property type="type" value="gene"/>
</dbReference>
<dbReference type="MIM" id="309549">
    <property type="type" value="phenotype"/>
</dbReference>
<dbReference type="neXtProt" id="NX_Q9UET6"/>
<dbReference type="OpenTargets" id="ENSG00000068438"/>
<dbReference type="Orphanet" id="777">
    <property type="disease" value="X-linked non-syndromic intellectual disability"/>
</dbReference>
<dbReference type="PharmGKB" id="PA28417"/>
<dbReference type="VEuPathDB" id="HostDB:ENSG00000068438"/>
<dbReference type="eggNOG" id="KOG1099">
    <property type="taxonomic scope" value="Eukaryota"/>
</dbReference>
<dbReference type="GeneTree" id="ENSGT00730000111146"/>
<dbReference type="HOGENOM" id="CLU_009422_1_2_1"/>
<dbReference type="InParanoid" id="Q9UET6"/>
<dbReference type="OMA" id="FIVCLNF"/>
<dbReference type="OrthoDB" id="289250at2759"/>
<dbReference type="PAN-GO" id="Q9UET6">
    <property type="GO annotations" value="4 GO annotations based on evolutionary models"/>
</dbReference>
<dbReference type="PhylomeDB" id="Q9UET6"/>
<dbReference type="TreeFam" id="TF314897"/>
<dbReference type="PathwayCommons" id="Q9UET6"/>
<dbReference type="Reactome" id="R-HSA-6782315">
    <property type="pathway name" value="tRNA modification in the nucleus and cytosol"/>
</dbReference>
<dbReference type="SignaLink" id="Q9UET6"/>
<dbReference type="BioGRID-ORCS" id="24140">
    <property type="hits" value="19 hits in 782 CRISPR screens"/>
</dbReference>
<dbReference type="ChiTaRS" id="FTSJ1">
    <property type="organism name" value="human"/>
</dbReference>
<dbReference type="GeneWiki" id="FTSJ1"/>
<dbReference type="GenomeRNAi" id="24140"/>
<dbReference type="Pharos" id="Q9UET6">
    <property type="development level" value="Tbio"/>
</dbReference>
<dbReference type="PRO" id="PR:Q9UET6"/>
<dbReference type="Proteomes" id="UP000005640">
    <property type="component" value="Chromosome X"/>
</dbReference>
<dbReference type="RNAct" id="Q9UET6">
    <property type="molecule type" value="protein"/>
</dbReference>
<dbReference type="Bgee" id="ENSG00000068438">
    <property type="expression patterns" value="Expressed in stromal cell of endometrium and 211 other cell types or tissues"/>
</dbReference>
<dbReference type="ExpressionAtlas" id="Q9UET6">
    <property type="expression patterns" value="baseline and differential"/>
</dbReference>
<dbReference type="GO" id="GO:0005737">
    <property type="term" value="C:cytoplasm"/>
    <property type="evidence" value="ECO:0000318"/>
    <property type="project" value="GO_Central"/>
</dbReference>
<dbReference type="GO" id="GO:0005829">
    <property type="term" value="C:cytosol"/>
    <property type="evidence" value="ECO:0000314"/>
    <property type="project" value="HPA"/>
</dbReference>
<dbReference type="GO" id="GO:0005634">
    <property type="term" value="C:nucleus"/>
    <property type="evidence" value="ECO:0000314"/>
    <property type="project" value="UniProtKB"/>
</dbReference>
<dbReference type="GO" id="GO:1904047">
    <property type="term" value="F:S-adenosyl-L-methionine binding"/>
    <property type="evidence" value="ECO:0000314"/>
    <property type="project" value="UniProtKB"/>
</dbReference>
<dbReference type="GO" id="GO:0106340">
    <property type="term" value="F:tRNA (cytidine(32)/guanosine(34)-2'-O)-methyltransferase activity"/>
    <property type="evidence" value="ECO:0000315"/>
    <property type="project" value="UniProtKB"/>
</dbReference>
<dbReference type="GO" id="GO:0016423">
    <property type="term" value="F:tRNA (guanine) methyltransferase activity"/>
    <property type="evidence" value="ECO:0000314"/>
    <property type="project" value="UniProtKB"/>
</dbReference>
<dbReference type="GO" id="GO:0106050">
    <property type="term" value="F:tRNA 2'-O-methyltransferase activity"/>
    <property type="evidence" value="ECO:0000269"/>
    <property type="project" value="Reactome"/>
</dbReference>
<dbReference type="GO" id="GO:0008175">
    <property type="term" value="F:tRNA methyltransferase activity"/>
    <property type="evidence" value="ECO:0000318"/>
    <property type="project" value="GO_Central"/>
</dbReference>
<dbReference type="GO" id="GO:0002181">
    <property type="term" value="P:cytoplasmic translation"/>
    <property type="evidence" value="ECO:0000315"/>
    <property type="project" value="UniProtKB"/>
</dbReference>
<dbReference type="GO" id="GO:0022008">
    <property type="term" value="P:neurogenesis"/>
    <property type="evidence" value="ECO:0000314"/>
    <property type="project" value="UniProtKB"/>
</dbReference>
<dbReference type="GO" id="GO:0030488">
    <property type="term" value="P:tRNA methylation"/>
    <property type="evidence" value="ECO:0000315"/>
    <property type="project" value="UniProtKB"/>
</dbReference>
<dbReference type="GO" id="GO:0006400">
    <property type="term" value="P:tRNA modification"/>
    <property type="evidence" value="ECO:0000304"/>
    <property type="project" value="Reactome"/>
</dbReference>
<dbReference type="GO" id="GO:0002128">
    <property type="term" value="P:tRNA nucleoside ribose methylation"/>
    <property type="evidence" value="ECO:0000315"/>
    <property type="project" value="UniProtKB"/>
</dbReference>
<dbReference type="GO" id="GO:0002130">
    <property type="term" value="P:wobble position ribose methylation"/>
    <property type="evidence" value="ECO:0000314"/>
    <property type="project" value="UniProtKB"/>
</dbReference>
<dbReference type="FunFam" id="3.40.50.150:FF:000040">
    <property type="entry name" value="Putative ribosomal RNA methyltransferase 1"/>
    <property type="match status" value="1"/>
</dbReference>
<dbReference type="Gene3D" id="3.40.50.150">
    <property type="entry name" value="Vaccinia Virus protein VP39"/>
    <property type="match status" value="1"/>
</dbReference>
<dbReference type="HAMAP" id="MF_01547">
    <property type="entry name" value="RNA_methyltr_E"/>
    <property type="match status" value="1"/>
</dbReference>
<dbReference type="HAMAP" id="MF_03162">
    <property type="entry name" value="RNA_methyltr_E_TRM7"/>
    <property type="match status" value="1"/>
</dbReference>
<dbReference type="InterPro" id="IPR028590">
    <property type="entry name" value="RNA_methyltr_E_TRM7"/>
</dbReference>
<dbReference type="InterPro" id="IPR050082">
    <property type="entry name" value="RNA_methyltr_RlmE"/>
</dbReference>
<dbReference type="InterPro" id="IPR002877">
    <property type="entry name" value="RNA_MeTrfase_FtsJ_dom"/>
</dbReference>
<dbReference type="InterPro" id="IPR015507">
    <property type="entry name" value="rRNA-MeTfrase_E"/>
</dbReference>
<dbReference type="InterPro" id="IPR029063">
    <property type="entry name" value="SAM-dependent_MTases_sf"/>
</dbReference>
<dbReference type="PANTHER" id="PTHR10920">
    <property type="entry name" value="RIBOSOMAL RNA METHYLTRANSFERASE"/>
    <property type="match status" value="1"/>
</dbReference>
<dbReference type="PANTHER" id="PTHR10920:SF12">
    <property type="entry name" value="TRNA (CYTIDINE(32)_GUANOSINE(34)-2'-O)-METHYLTRANSFERASE-RELATED"/>
    <property type="match status" value="1"/>
</dbReference>
<dbReference type="Pfam" id="PF01728">
    <property type="entry name" value="FtsJ"/>
    <property type="match status" value="1"/>
</dbReference>
<dbReference type="SUPFAM" id="SSF53335">
    <property type="entry name" value="S-adenosyl-L-methionine-dependent methyltransferases"/>
    <property type="match status" value="1"/>
</dbReference>
<protein>
    <recommendedName>
        <fullName evidence="15">tRNA (cytidine(32)/guanosine(34)-2'-O)-methyltransferase</fullName>
        <ecNumber evidence="1 11 12 16">2.1.1.205</ecNumber>
    </recommendedName>
    <alternativeName>
        <fullName evidence="1">2'-O-ribose RNA methyltransferase TRM7 homolog</fullName>
    </alternativeName>
    <alternativeName>
        <fullName evidence="1">Protein ftsJ homolog 1</fullName>
    </alternativeName>
</protein>
<feature type="chain" id="PRO_0000155575" description="tRNA (cytidine(32)/guanosine(34)-2'-O)-methyltransferase">
    <location>
        <begin position="1"/>
        <end position="329"/>
    </location>
</feature>
<feature type="region of interest" description="Required for binding to WDR6" evidence="11">
    <location>
        <begin position="221"/>
        <end position="240"/>
    </location>
</feature>
<feature type="active site" description="Proton acceptor" evidence="1">
    <location>
        <position position="156"/>
    </location>
</feature>
<feature type="binding site" evidence="1">
    <location>
        <position position="53"/>
    </location>
    <ligand>
        <name>S-adenosyl-L-methionine</name>
        <dbReference type="ChEBI" id="CHEBI:59789"/>
    </ligand>
</feature>
<feature type="binding site" evidence="1">
    <location>
        <position position="55"/>
    </location>
    <ligand>
        <name>S-adenosyl-L-methionine</name>
        <dbReference type="ChEBI" id="CHEBI:59789"/>
    </ligand>
</feature>
<feature type="binding site" evidence="1">
    <location>
        <position position="75"/>
    </location>
    <ligand>
        <name>S-adenosyl-L-methionine</name>
        <dbReference type="ChEBI" id="CHEBI:59789"/>
    </ligand>
</feature>
<feature type="binding site" evidence="1">
    <location>
        <position position="91"/>
    </location>
    <ligand>
        <name>S-adenosyl-L-methionine</name>
        <dbReference type="ChEBI" id="CHEBI:59789"/>
    </ligand>
</feature>
<feature type="binding site" evidence="1">
    <location>
        <position position="116"/>
    </location>
    <ligand>
        <name>S-adenosyl-L-methionine</name>
        <dbReference type="ChEBI" id="CHEBI:59789"/>
    </ligand>
</feature>
<feature type="modified residue" description="Phosphoserine" evidence="17">
    <location>
        <position position="271"/>
    </location>
</feature>
<feature type="splice variant" id="VSP_041419" description="In isoform 2." evidence="14">
    <location>
        <begin position="219"/>
        <end position="220"/>
    </location>
</feature>
<feature type="sequence variant" id="VAR_088175" description="In XLID9; severely decreases methylation of guanosine in tRNA(Phe) and cytidine in tRNA(Trp); methylation of cytidine in tRNA(Phe) appears normal." evidence="8 13">
    <original>A</original>
    <variation>P</variation>
    <location>
        <position position="26"/>
    </location>
</feature>
<keyword id="KW-0025">Alternative splicing</keyword>
<keyword id="KW-0963">Cytoplasm</keyword>
<keyword id="KW-0225">Disease variant</keyword>
<keyword id="KW-0991">Intellectual disability</keyword>
<keyword id="KW-0489">Methyltransferase</keyword>
<keyword id="KW-0539">Nucleus</keyword>
<keyword id="KW-0597">Phosphoprotein</keyword>
<keyword id="KW-1267">Proteomics identification</keyword>
<keyword id="KW-1185">Reference proteome</keyword>
<keyword id="KW-0949">S-adenosyl-L-methionine</keyword>
<keyword id="KW-0808">Transferase</keyword>
<keyword id="KW-0819">tRNA processing</keyword>
<name>TRM7_HUMAN</name>